<protein>
    <recommendedName>
        <fullName evidence="1">Ribosome-releasing factor 2, mitochondrial</fullName>
        <shortName evidence="1">RRF2mt</shortName>
        <ecNumber evidence="1">3.6.5.-</ecNumber>
    </recommendedName>
    <alternativeName>
        <fullName evidence="1">Elongation factor G 2, mitochondrial</fullName>
        <shortName evidence="1">EF-G2mt</shortName>
        <shortName evidence="1">mEF-G 2</shortName>
    </alternativeName>
</protein>
<proteinExistence type="evidence at transcript level"/>
<sequence length="762" mass="83643">MLLSLTFPVLRGCTGHLVNRSLQAPRWRVTWKRSYSLLQDEVKSLRTVVNPDISKIRNIGIMAHIDAGKTTTTERMLYYSGYTRALGDVDDGDTVTDYMAQERERGITIQSAAVTFDWKDYRINLIDTPGHVDFTLEVERALRVLDGAVAVFDASAGVEAQTMTVWRQAEKHQIPCVCFLNKMDKPAASLRYSLDSIKAKLKANPVLLQIPIGSGKSFTGLVDLITRQKMMWQGNALTNDGRSFEINSLQPSDDPNVLLAVSEARAALIEQVADLDDDFAELLLGEYGENFDAVPAVKLQEAVRRVTLARKGVPVLCGSSLKNKGVQPLLDAITAYLPAPNERNHDLVRWYKNDLCALAFKVVHDKQRGPLVFVRIYSGSMKAQSSVHNINRNETEKMSRLLLPFADQQIEIPSLSAGNIALTVGLKQTVTGDTIVSSKASAAAAIRRAQAEAESRSNSHSAALAGVEVPEPVFFCSIEPPTMAKQADLEHALNCLQREDPSLKVRIDPDSGQTVLCGMGELHIEIIHDRIKREYKIETHLGPLQVAYRETILQSATAKDLLDRILGEKRHVVSVELTVHPLKENSSASCDITFEEDVKAMLPADVREAVENGVQSAYLQGPVLGFPVQGVQTVIQNVRLESGTSAAMVSACVSRCMLKALKQAGGQVLEPVMALEVTVGEEHLSSVLADLSQRRGTICDIQSRQDNKILLADVPLAEMMGYSTVLRTLTSGNATFSLELSSYEPMNSQDQNILLNKMAGLT</sequence>
<dbReference type="EC" id="3.6.5.-" evidence="1"/>
<dbReference type="EMBL" id="BX571730">
    <property type="protein sequence ID" value="CAM16014.1"/>
    <property type="status" value="ALT_SEQ"/>
    <property type="molecule type" value="Genomic_DNA"/>
</dbReference>
<dbReference type="EMBL" id="BC095886">
    <property type="protein sequence ID" value="AAH95886.1"/>
    <property type="molecule type" value="mRNA"/>
</dbReference>
<dbReference type="EMBL" id="BC125896">
    <property type="protein sequence ID" value="AAI25897.1"/>
    <property type="molecule type" value="mRNA"/>
</dbReference>
<dbReference type="RefSeq" id="NP_001071013.1">
    <property type="nucleotide sequence ID" value="NM_001077545.1"/>
</dbReference>
<dbReference type="SMR" id="A0JMI9"/>
<dbReference type="FunCoup" id="A0JMI9">
    <property type="interactions" value="360"/>
</dbReference>
<dbReference type="STRING" id="7955.ENSDARP00000006504"/>
<dbReference type="PaxDb" id="7955-ENSDARP00000006504"/>
<dbReference type="PeptideAtlas" id="A0JMI9"/>
<dbReference type="Ensembl" id="ENSDART00000016314">
    <property type="protein sequence ID" value="ENSDARP00000006504"/>
    <property type="gene ID" value="ENSDARG00000005561"/>
</dbReference>
<dbReference type="GeneID" id="558184"/>
<dbReference type="KEGG" id="dre:558184"/>
<dbReference type="AGR" id="ZFIN:ZDB-GENE-060201-3"/>
<dbReference type="CTD" id="84340"/>
<dbReference type="ZFIN" id="ZDB-GENE-060201-3">
    <property type="gene designation" value="gfm2"/>
</dbReference>
<dbReference type="eggNOG" id="KOG0464">
    <property type="taxonomic scope" value="Eukaryota"/>
</dbReference>
<dbReference type="HOGENOM" id="CLU_002794_4_1_1"/>
<dbReference type="InParanoid" id="A0JMI9"/>
<dbReference type="OMA" id="GPQFTFP"/>
<dbReference type="OrthoDB" id="198619at2759"/>
<dbReference type="PhylomeDB" id="A0JMI9"/>
<dbReference type="TreeFam" id="TF314848"/>
<dbReference type="PRO" id="PR:A0JMI9"/>
<dbReference type="Proteomes" id="UP000000437">
    <property type="component" value="Chromosome 5"/>
</dbReference>
<dbReference type="Bgee" id="ENSDARG00000005561">
    <property type="expression patterns" value="Expressed in somite and 27 other cell types or tissues"/>
</dbReference>
<dbReference type="GO" id="GO:0005739">
    <property type="term" value="C:mitochondrion"/>
    <property type="evidence" value="ECO:0007669"/>
    <property type="project" value="UniProtKB-SubCell"/>
</dbReference>
<dbReference type="GO" id="GO:0005525">
    <property type="term" value="F:GTP binding"/>
    <property type="evidence" value="ECO:0007669"/>
    <property type="project" value="UniProtKB-UniRule"/>
</dbReference>
<dbReference type="GO" id="GO:0003924">
    <property type="term" value="F:GTPase activity"/>
    <property type="evidence" value="ECO:0000250"/>
    <property type="project" value="UniProtKB"/>
</dbReference>
<dbReference type="GO" id="GO:0032543">
    <property type="term" value="P:mitochondrial translation"/>
    <property type="evidence" value="ECO:0000250"/>
    <property type="project" value="UniProtKB"/>
</dbReference>
<dbReference type="GO" id="GO:0032790">
    <property type="term" value="P:ribosome disassembly"/>
    <property type="evidence" value="ECO:0000250"/>
    <property type="project" value="UniProtKB"/>
</dbReference>
<dbReference type="CDD" id="cd01886">
    <property type="entry name" value="EF-G"/>
    <property type="match status" value="1"/>
</dbReference>
<dbReference type="CDD" id="cd16262">
    <property type="entry name" value="EFG_III"/>
    <property type="match status" value="1"/>
</dbReference>
<dbReference type="CDD" id="cd03713">
    <property type="entry name" value="EFG_mtEFG_C"/>
    <property type="match status" value="1"/>
</dbReference>
<dbReference type="CDD" id="cd04092">
    <property type="entry name" value="mtEFG2_II_like"/>
    <property type="match status" value="1"/>
</dbReference>
<dbReference type="CDD" id="cd01693">
    <property type="entry name" value="mtEFG2_like_IV"/>
    <property type="match status" value="1"/>
</dbReference>
<dbReference type="FunFam" id="2.40.30.10:FF:000053">
    <property type="entry name" value="Ribosome-releasing factor 2, mitochondrial"/>
    <property type="match status" value="1"/>
</dbReference>
<dbReference type="FunFam" id="3.30.230.10:FF:000033">
    <property type="entry name" value="Ribosome-releasing factor 2, mitochondrial"/>
    <property type="match status" value="1"/>
</dbReference>
<dbReference type="FunFam" id="3.30.70.240:FF:000008">
    <property type="entry name" value="Ribosome-releasing factor 2, mitochondrial"/>
    <property type="match status" value="1"/>
</dbReference>
<dbReference type="FunFam" id="3.30.70.870:FF:000005">
    <property type="entry name" value="Ribosome-releasing factor 2, mitochondrial"/>
    <property type="match status" value="1"/>
</dbReference>
<dbReference type="FunFam" id="3.40.50.300:FF:000514">
    <property type="entry name" value="Ribosome-releasing factor 2, mitochondrial"/>
    <property type="match status" value="1"/>
</dbReference>
<dbReference type="Gene3D" id="3.30.230.10">
    <property type="match status" value="1"/>
</dbReference>
<dbReference type="Gene3D" id="3.30.70.240">
    <property type="match status" value="1"/>
</dbReference>
<dbReference type="Gene3D" id="3.30.70.870">
    <property type="entry name" value="Elongation Factor G (Translational Gtpase), domain 3"/>
    <property type="match status" value="1"/>
</dbReference>
<dbReference type="Gene3D" id="3.40.50.300">
    <property type="entry name" value="P-loop containing nucleotide triphosphate hydrolases"/>
    <property type="match status" value="1"/>
</dbReference>
<dbReference type="Gene3D" id="2.40.30.10">
    <property type="entry name" value="Translation factors"/>
    <property type="match status" value="1"/>
</dbReference>
<dbReference type="HAMAP" id="MF_03059">
    <property type="entry name" value="mEF_G_2"/>
    <property type="match status" value="1"/>
</dbReference>
<dbReference type="InterPro" id="IPR030851">
    <property type="entry name" value="EFG2"/>
</dbReference>
<dbReference type="InterPro" id="IPR041095">
    <property type="entry name" value="EFG_II"/>
</dbReference>
<dbReference type="InterPro" id="IPR009022">
    <property type="entry name" value="EFG_III"/>
</dbReference>
<dbReference type="InterPro" id="IPR035647">
    <property type="entry name" value="EFG_III/V"/>
</dbReference>
<dbReference type="InterPro" id="IPR035649">
    <property type="entry name" value="EFG_V"/>
</dbReference>
<dbReference type="InterPro" id="IPR000640">
    <property type="entry name" value="EFG_V-like"/>
</dbReference>
<dbReference type="InterPro" id="IPR004161">
    <property type="entry name" value="EFTu-like_2"/>
</dbReference>
<dbReference type="InterPro" id="IPR031157">
    <property type="entry name" value="G_TR_CS"/>
</dbReference>
<dbReference type="InterPro" id="IPR027417">
    <property type="entry name" value="P-loop_NTPase"/>
</dbReference>
<dbReference type="InterPro" id="IPR020568">
    <property type="entry name" value="Ribosomal_Su5_D2-typ_SF"/>
</dbReference>
<dbReference type="InterPro" id="IPR014721">
    <property type="entry name" value="Ribsml_uS5_D2-typ_fold_subgr"/>
</dbReference>
<dbReference type="InterPro" id="IPR005225">
    <property type="entry name" value="Small_GTP-bd"/>
</dbReference>
<dbReference type="InterPro" id="IPR000795">
    <property type="entry name" value="T_Tr_GTP-bd_dom"/>
</dbReference>
<dbReference type="InterPro" id="IPR009000">
    <property type="entry name" value="Transl_B-barrel_sf"/>
</dbReference>
<dbReference type="InterPro" id="IPR005517">
    <property type="entry name" value="Transl_elong_EFG/EF2_IV"/>
</dbReference>
<dbReference type="NCBIfam" id="TIGR00231">
    <property type="entry name" value="small_GTP"/>
    <property type="match status" value="1"/>
</dbReference>
<dbReference type="PANTHER" id="PTHR43261:SF1">
    <property type="entry name" value="RIBOSOME-RELEASING FACTOR 2, MITOCHONDRIAL"/>
    <property type="match status" value="1"/>
</dbReference>
<dbReference type="PANTHER" id="PTHR43261">
    <property type="entry name" value="TRANSLATION ELONGATION FACTOR G-RELATED"/>
    <property type="match status" value="1"/>
</dbReference>
<dbReference type="Pfam" id="PF00679">
    <property type="entry name" value="EFG_C"/>
    <property type="match status" value="1"/>
</dbReference>
<dbReference type="Pfam" id="PF14492">
    <property type="entry name" value="EFG_III"/>
    <property type="match status" value="1"/>
</dbReference>
<dbReference type="Pfam" id="PF03764">
    <property type="entry name" value="EFG_IV"/>
    <property type="match status" value="1"/>
</dbReference>
<dbReference type="Pfam" id="PF00009">
    <property type="entry name" value="GTP_EFTU"/>
    <property type="match status" value="1"/>
</dbReference>
<dbReference type="Pfam" id="PF03144">
    <property type="entry name" value="GTP_EFTU_D2"/>
    <property type="match status" value="1"/>
</dbReference>
<dbReference type="PRINTS" id="PR00315">
    <property type="entry name" value="ELONGATNFCT"/>
</dbReference>
<dbReference type="SMART" id="SM00838">
    <property type="entry name" value="EFG_C"/>
    <property type="match status" value="1"/>
</dbReference>
<dbReference type="SMART" id="SM00889">
    <property type="entry name" value="EFG_IV"/>
    <property type="match status" value="1"/>
</dbReference>
<dbReference type="SUPFAM" id="SSF54980">
    <property type="entry name" value="EF-G C-terminal domain-like"/>
    <property type="match status" value="2"/>
</dbReference>
<dbReference type="SUPFAM" id="SSF52540">
    <property type="entry name" value="P-loop containing nucleoside triphosphate hydrolases"/>
    <property type="match status" value="1"/>
</dbReference>
<dbReference type="SUPFAM" id="SSF54211">
    <property type="entry name" value="Ribosomal protein S5 domain 2-like"/>
    <property type="match status" value="1"/>
</dbReference>
<dbReference type="SUPFAM" id="SSF50447">
    <property type="entry name" value="Translation proteins"/>
    <property type="match status" value="1"/>
</dbReference>
<dbReference type="PROSITE" id="PS00301">
    <property type="entry name" value="G_TR_1"/>
    <property type="match status" value="1"/>
</dbReference>
<dbReference type="PROSITE" id="PS51722">
    <property type="entry name" value="G_TR_2"/>
    <property type="match status" value="1"/>
</dbReference>
<organism>
    <name type="scientific">Danio rerio</name>
    <name type="common">Zebrafish</name>
    <name type="synonym">Brachydanio rerio</name>
    <dbReference type="NCBI Taxonomy" id="7955"/>
    <lineage>
        <taxon>Eukaryota</taxon>
        <taxon>Metazoa</taxon>
        <taxon>Chordata</taxon>
        <taxon>Craniata</taxon>
        <taxon>Vertebrata</taxon>
        <taxon>Euteleostomi</taxon>
        <taxon>Actinopterygii</taxon>
        <taxon>Neopterygii</taxon>
        <taxon>Teleostei</taxon>
        <taxon>Ostariophysi</taxon>
        <taxon>Cypriniformes</taxon>
        <taxon>Danionidae</taxon>
        <taxon>Danioninae</taxon>
        <taxon>Danio</taxon>
    </lineage>
</organism>
<keyword id="KW-0342">GTP-binding</keyword>
<keyword id="KW-0378">Hydrolase</keyword>
<keyword id="KW-0496">Mitochondrion</keyword>
<keyword id="KW-0547">Nucleotide-binding</keyword>
<keyword id="KW-0648">Protein biosynthesis</keyword>
<keyword id="KW-1185">Reference proteome</keyword>
<keyword id="KW-0809">Transit peptide</keyword>
<evidence type="ECO:0000255" key="1">
    <source>
        <dbReference type="HAMAP-Rule" id="MF_03059"/>
    </source>
</evidence>
<evidence type="ECO:0000305" key="2"/>
<reference key="1">
    <citation type="journal article" date="2013" name="Nature">
        <title>The zebrafish reference genome sequence and its relationship to the human genome.</title>
        <authorList>
            <person name="Howe K."/>
            <person name="Clark M.D."/>
            <person name="Torroja C.F."/>
            <person name="Torrance J."/>
            <person name="Berthelot C."/>
            <person name="Muffato M."/>
            <person name="Collins J.E."/>
            <person name="Humphray S."/>
            <person name="McLaren K."/>
            <person name="Matthews L."/>
            <person name="McLaren S."/>
            <person name="Sealy I."/>
            <person name="Caccamo M."/>
            <person name="Churcher C."/>
            <person name="Scott C."/>
            <person name="Barrett J.C."/>
            <person name="Koch R."/>
            <person name="Rauch G.J."/>
            <person name="White S."/>
            <person name="Chow W."/>
            <person name="Kilian B."/>
            <person name="Quintais L.T."/>
            <person name="Guerra-Assuncao J.A."/>
            <person name="Zhou Y."/>
            <person name="Gu Y."/>
            <person name="Yen J."/>
            <person name="Vogel J.H."/>
            <person name="Eyre T."/>
            <person name="Redmond S."/>
            <person name="Banerjee R."/>
            <person name="Chi J."/>
            <person name="Fu B."/>
            <person name="Langley E."/>
            <person name="Maguire S.F."/>
            <person name="Laird G.K."/>
            <person name="Lloyd D."/>
            <person name="Kenyon E."/>
            <person name="Donaldson S."/>
            <person name="Sehra H."/>
            <person name="Almeida-King J."/>
            <person name="Loveland J."/>
            <person name="Trevanion S."/>
            <person name="Jones M."/>
            <person name="Quail M."/>
            <person name="Willey D."/>
            <person name="Hunt A."/>
            <person name="Burton J."/>
            <person name="Sims S."/>
            <person name="McLay K."/>
            <person name="Plumb B."/>
            <person name="Davis J."/>
            <person name="Clee C."/>
            <person name="Oliver K."/>
            <person name="Clark R."/>
            <person name="Riddle C."/>
            <person name="Elliot D."/>
            <person name="Threadgold G."/>
            <person name="Harden G."/>
            <person name="Ware D."/>
            <person name="Begum S."/>
            <person name="Mortimore B."/>
            <person name="Kerry G."/>
            <person name="Heath P."/>
            <person name="Phillimore B."/>
            <person name="Tracey A."/>
            <person name="Corby N."/>
            <person name="Dunn M."/>
            <person name="Johnson C."/>
            <person name="Wood J."/>
            <person name="Clark S."/>
            <person name="Pelan S."/>
            <person name="Griffiths G."/>
            <person name="Smith M."/>
            <person name="Glithero R."/>
            <person name="Howden P."/>
            <person name="Barker N."/>
            <person name="Lloyd C."/>
            <person name="Stevens C."/>
            <person name="Harley J."/>
            <person name="Holt K."/>
            <person name="Panagiotidis G."/>
            <person name="Lovell J."/>
            <person name="Beasley H."/>
            <person name="Henderson C."/>
            <person name="Gordon D."/>
            <person name="Auger K."/>
            <person name="Wright D."/>
            <person name="Collins J."/>
            <person name="Raisen C."/>
            <person name="Dyer L."/>
            <person name="Leung K."/>
            <person name="Robertson L."/>
            <person name="Ambridge K."/>
            <person name="Leongamornlert D."/>
            <person name="McGuire S."/>
            <person name="Gilderthorp R."/>
            <person name="Griffiths C."/>
            <person name="Manthravadi D."/>
            <person name="Nichol S."/>
            <person name="Barker G."/>
            <person name="Whitehead S."/>
            <person name="Kay M."/>
            <person name="Brown J."/>
            <person name="Murnane C."/>
            <person name="Gray E."/>
            <person name="Humphries M."/>
            <person name="Sycamore N."/>
            <person name="Barker D."/>
            <person name="Saunders D."/>
            <person name="Wallis J."/>
            <person name="Babbage A."/>
            <person name="Hammond S."/>
            <person name="Mashreghi-Mohammadi M."/>
            <person name="Barr L."/>
            <person name="Martin S."/>
            <person name="Wray P."/>
            <person name="Ellington A."/>
            <person name="Matthews N."/>
            <person name="Ellwood M."/>
            <person name="Woodmansey R."/>
            <person name="Clark G."/>
            <person name="Cooper J."/>
            <person name="Tromans A."/>
            <person name="Grafham D."/>
            <person name="Skuce C."/>
            <person name="Pandian R."/>
            <person name="Andrews R."/>
            <person name="Harrison E."/>
            <person name="Kimberley A."/>
            <person name="Garnett J."/>
            <person name="Fosker N."/>
            <person name="Hall R."/>
            <person name="Garner P."/>
            <person name="Kelly D."/>
            <person name="Bird C."/>
            <person name="Palmer S."/>
            <person name="Gehring I."/>
            <person name="Berger A."/>
            <person name="Dooley C.M."/>
            <person name="Ersan-Urun Z."/>
            <person name="Eser C."/>
            <person name="Geiger H."/>
            <person name="Geisler M."/>
            <person name="Karotki L."/>
            <person name="Kirn A."/>
            <person name="Konantz J."/>
            <person name="Konantz M."/>
            <person name="Oberlander M."/>
            <person name="Rudolph-Geiger S."/>
            <person name="Teucke M."/>
            <person name="Lanz C."/>
            <person name="Raddatz G."/>
            <person name="Osoegawa K."/>
            <person name="Zhu B."/>
            <person name="Rapp A."/>
            <person name="Widaa S."/>
            <person name="Langford C."/>
            <person name="Yang F."/>
            <person name="Schuster S.C."/>
            <person name="Carter N.P."/>
            <person name="Harrow J."/>
            <person name="Ning Z."/>
            <person name="Herrero J."/>
            <person name="Searle S.M."/>
            <person name="Enright A."/>
            <person name="Geisler R."/>
            <person name="Plasterk R.H."/>
            <person name="Lee C."/>
            <person name="Westerfield M."/>
            <person name="de Jong P.J."/>
            <person name="Zon L.I."/>
            <person name="Postlethwait J.H."/>
            <person name="Nusslein-Volhard C."/>
            <person name="Hubbard T.J."/>
            <person name="Roest Crollius H."/>
            <person name="Rogers J."/>
            <person name="Stemple D.L."/>
        </authorList>
    </citation>
    <scope>NUCLEOTIDE SEQUENCE [LARGE SCALE GENOMIC DNA]</scope>
    <source>
        <strain>Tuebingen</strain>
    </source>
</reference>
<reference key="2">
    <citation type="submission" date="2006-10" db="EMBL/GenBank/DDBJ databases">
        <authorList>
            <consortium name="NIH - Zebrafish Gene Collection (ZGC) project"/>
        </authorList>
    </citation>
    <scope>NUCLEOTIDE SEQUENCE [LARGE SCALE MRNA]</scope>
    <source>
        <tissue>Embryo</tissue>
    </source>
</reference>
<name>RRF2M_DANRE</name>
<comment type="function">
    <text evidence="1">Mitochondrial GTPase that mediates the disassembly of ribosomes from messenger RNA at the termination of mitochondrial protein biosynthesis. Acts in collaboration with mrrf. GTP hydrolysis follows the ribosome disassembly and probably occurs on the ribosome large subunit. Not involved in the GTP-dependent ribosomal translocation step during translation elongation.</text>
</comment>
<comment type="catalytic activity">
    <reaction evidence="1">
        <text>GTP + H2O = GDP + phosphate + H(+)</text>
        <dbReference type="Rhea" id="RHEA:19669"/>
        <dbReference type="ChEBI" id="CHEBI:15377"/>
        <dbReference type="ChEBI" id="CHEBI:15378"/>
        <dbReference type="ChEBI" id="CHEBI:37565"/>
        <dbReference type="ChEBI" id="CHEBI:43474"/>
        <dbReference type="ChEBI" id="CHEBI:58189"/>
    </reaction>
    <physiologicalReaction direction="left-to-right" evidence="1">
        <dbReference type="Rhea" id="RHEA:19670"/>
    </physiologicalReaction>
</comment>
<comment type="subcellular location">
    <subcellularLocation>
        <location evidence="1">Mitochondrion</location>
    </subcellularLocation>
</comment>
<comment type="similarity">
    <text evidence="1">Belongs to the TRAFAC class translation factor GTPase superfamily. Classic translation factor GTPase family. EF-G/EF-2 subfamily.</text>
</comment>
<comment type="sequence caution" evidence="2">
    <conflict type="erroneous gene model prediction">
        <sequence resource="EMBL-CDS" id="CAM16014"/>
    </conflict>
</comment>
<feature type="transit peptide" description="Mitochondrion" evidence="1">
    <location>
        <begin position="1"/>
        <end position="35"/>
    </location>
</feature>
<feature type="chain" id="PRO_0000385595" description="Ribosome-releasing factor 2, mitochondrial">
    <location>
        <begin position="36"/>
        <end position="762"/>
    </location>
</feature>
<feature type="domain" description="tr-type G">
    <location>
        <begin position="54"/>
        <end position="341"/>
    </location>
</feature>
<feature type="binding site" evidence="1">
    <location>
        <begin position="63"/>
        <end position="70"/>
    </location>
    <ligand>
        <name>GTP</name>
        <dbReference type="ChEBI" id="CHEBI:37565"/>
    </ligand>
</feature>
<feature type="binding site" evidence="1">
    <location>
        <begin position="127"/>
        <end position="131"/>
    </location>
    <ligand>
        <name>GTP</name>
        <dbReference type="ChEBI" id="CHEBI:37565"/>
    </ligand>
</feature>
<feature type="binding site" evidence="1">
    <location>
        <begin position="181"/>
        <end position="184"/>
    </location>
    <ligand>
        <name>GTP</name>
        <dbReference type="ChEBI" id="CHEBI:37565"/>
    </ligand>
</feature>
<feature type="sequence conflict" description="In Ref. 2; AAH95886." evidence="2" ref="2">
    <original>I</original>
    <variation>V</variation>
    <location>
        <position position="246"/>
    </location>
</feature>
<feature type="sequence conflict" description="In Ref. 2; AAH95886/AAI25897." evidence="2" ref="2">
    <original>D</original>
    <variation>E</variation>
    <location>
        <position position="278"/>
    </location>
</feature>
<feature type="sequence conflict" description="In Ref. 2; AAH95886/AAI25897." evidence="2" ref="2">
    <original>R</original>
    <variation>M</variation>
    <location>
        <position position="456"/>
    </location>
</feature>
<feature type="sequence conflict" description="In Ref. 2; AAI25897." evidence="2" ref="2">
    <original>A</original>
    <variation>V</variation>
    <location>
        <position position="556"/>
    </location>
</feature>
<feature type="sequence conflict" description="In Ref. 2; AAH95886/AAI25897." evidence="2" ref="2">
    <original>N</original>
    <variation>D</variation>
    <location>
        <position position="637"/>
    </location>
</feature>
<accession>A0JMI9</accession>
<accession>A2BHE0</accession>
<accession>Q4VBG9</accession>
<gene>
    <name type="primary">gfm2</name>
    <name type="synonym">efg2</name>
    <name type="ORF">si:dkey-35i22.3</name>
    <name type="ORF">zgc:153835</name>
</gene>